<protein>
    <recommendedName>
        <fullName>Chemotaxis protein methyltransferase</fullName>
        <ecNumber>2.1.1.80</ecNumber>
    </recommendedName>
</protein>
<accession>P31105</accession>
<accession>O32009</accession>
<dbReference type="EC" id="2.1.1.80"/>
<dbReference type="EMBL" id="X73681">
    <property type="protein sequence ID" value="CAA52033.1"/>
    <property type="molecule type" value="Genomic_DNA"/>
</dbReference>
<dbReference type="EMBL" id="M80245">
    <property type="protein sequence ID" value="AAA20858.1"/>
    <property type="molecule type" value="Genomic_DNA"/>
</dbReference>
<dbReference type="EMBL" id="AL009126">
    <property type="protein sequence ID" value="CAB14188.2"/>
    <property type="molecule type" value="Genomic_DNA"/>
</dbReference>
<dbReference type="PIR" id="A69599">
    <property type="entry name" value="A69599"/>
</dbReference>
<dbReference type="RefSeq" id="NP_390153.2">
    <property type="nucleotide sequence ID" value="NC_000964.3"/>
</dbReference>
<dbReference type="RefSeq" id="WP_003230589.1">
    <property type="nucleotide sequence ID" value="NZ_OZ025638.1"/>
</dbReference>
<dbReference type="PDB" id="5FTW">
    <property type="method" value="X-ray"/>
    <property type="resolution" value="1.80 A"/>
    <property type="chains" value="A=1-256"/>
</dbReference>
<dbReference type="PDBsum" id="5FTW"/>
<dbReference type="SMR" id="P31105"/>
<dbReference type="FunCoup" id="P31105">
    <property type="interactions" value="257"/>
</dbReference>
<dbReference type="STRING" id="224308.BSU22720"/>
<dbReference type="PaxDb" id="224308-BSU22720"/>
<dbReference type="EnsemblBacteria" id="CAB14188">
    <property type="protein sequence ID" value="CAB14188"/>
    <property type="gene ID" value="BSU_22720"/>
</dbReference>
<dbReference type="GeneID" id="939003"/>
<dbReference type="KEGG" id="bsu:BSU22720"/>
<dbReference type="eggNOG" id="COG1352">
    <property type="taxonomic scope" value="Bacteria"/>
</dbReference>
<dbReference type="InParanoid" id="P31105"/>
<dbReference type="OrthoDB" id="9816309at2"/>
<dbReference type="PhylomeDB" id="P31105"/>
<dbReference type="BioCyc" id="BSUB:BSU22720-MONOMER"/>
<dbReference type="Proteomes" id="UP000001570">
    <property type="component" value="Chromosome"/>
</dbReference>
<dbReference type="GO" id="GO:0008276">
    <property type="term" value="F:protein methyltransferase activity"/>
    <property type="evidence" value="ECO:0000318"/>
    <property type="project" value="GO_Central"/>
</dbReference>
<dbReference type="GO" id="GO:0008983">
    <property type="term" value="F:protein-glutamate O-methyltransferase activity"/>
    <property type="evidence" value="ECO:0007669"/>
    <property type="project" value="UniProtKB-EC"/>
</dbReference>
<dbReference type="GO" id="GO:0006935">
    <property type="term" value="P:chemotaxis"/>
    <property type="evidence" value="ECO:0007669"/>
    <property type="project" value="UniProtKB-KW"/>
</dbReference>
<dbReference type="GO" id="GO:0032259">
    <property type="term" value="P:methylation"/>
    <property type="evidence" value="ECO:0007669"/>
    <property type="project" value="UniProtKB-KW"/>
</dbReference>
<dbReference type="Gene3D" id="1.10.155.10">
    <property type="entry name" value="Chemotaxis receptor methyltransferase CheR, N-terminal domain"/>
    <property type="match status" value="1"/>
</dbReference>
<dbReference type="Gene3D" id="3.40.50.150">
    <property type="entry name" value="Vaccinia Virus protein VP39"/>
    <property type="match status" value="1"/>
</dbReference>
<dbReference type="InterPro" id="IPR050903">
    <property type="entry name" value="Bact_Chemotaxis_MeTrfase"/>
</dbReference>
<dbReference type="InterPro" id="IPR022642">
    <property type="entry name" value="CheR_C"/>
</dbReference>
<dbReference type="InterPro" id="IPR000780">
    <property type="entry name" value="CheR_MeTrfase"/>
</dbReference>
<dbReference type="InterPro" id="IPR022641">
    <property type="entry name" value="CheR_N"/>
</dbReference>
<dbReference type="InterPro" id="IPR036804">
    <property type="entry name" value="CheR_N_sf"/>
</dbReference>
<dbReference type="InterPro" id="IPR029063">
    <property type="entry name" value="SAM-dependent_MTases_sf"/>
</dbReference>
<dbReference type="PANTHER" id="PTHR24422">
    <property type="entry name" value="CHEMOTAXIS PROTEIN METHYLTRANSFERASE"/>
    <property type="match status" value="1"/>
</dbReference>
<dbReference type="PANTHER" id="PTHR24422:SF19">
    <property type="entry name" value="CHEMOTAXIS PROTEIN METHYLTRANSFERASE"/>
    <property type="match status" value="1"/>
</dbReference>
<dbReference type="Pfam" id="PF01739">
    <property type="entry name" value="CheR"/>
    <property type="match status" value="1"/>
</dbReference>
<dbReference type="Pfam" id="PF03705">
    <property type="entry name" value="CheR_N"/>
    <property type="match status" value="1"/>
</dbReference>
<dbReference type="PRINTS" id="PR00996">
    <property type="entry name" value="CHERMTFRASE"/>
</dbReference>
<dbReference type="SMART" id="SM00138">
    <property type="entry name" value="MeTrc"/>
    <property type="match status" value="1"/>
</dbReference>
<dbReference type="SUPFAM" id="SSF47757">
    <property type="entry name" value="Chemotaxis receptor methyltransferase CheR, N-terminal domain"/>
    <property type="match status" value="1"/>
</dbReference>
<dbReference type="SUPFAM" id="SSF53335">
    <property type="entry name" value="S-adenosyl-L-methionine-dependent methyltransferases"/>
    <property type="match status" value="1"/>
</dbReference>
<dbReference type="PROSITE" id="PS50123">
    <property type="entry name" value="CHER"/>
    <property type="match status" value="1"/>
</dbReference>
<keyword id="KW-0002">3D-structure</keyword>
<keyword id="KW-0145">Chemotaxis</keyword>
<keyword id="KW-0489">Methyltransferase</keyword>
<keyword id="KW-1185">Reference proteome</keyword>
<keyword id="KW-0949">S-adenosyl-L-methionine</keyword>
<keyword id="KW-0808">Transferase</keyword>
<sequence>MDTYSVFTTKWKQLTGVDLTLYKEAQMKRRLTSLYEKKGFQSFKDFAAALEKDQALLNETLDRMTINVSEFYRNYKRWEVLETAILPLIKTSRPLKIWSAACSTGEEPYTLAMLLDQQKGLPGYQILATDIDEKALEKAKKGVYQERSLQEVPLSVKDRYFTQNANRSYEVKTEIKKNITFKKHNLLADRYEQDFDLIVCRNVFIYFTESAKEELYLKMAHSLKKNGVLFVGSTEQIFNPEKFGLVPADTFFYQKR</sequence>
<organism>
    <name type="scientific">Bacillus subtilis (strain 168)</name>
    <dbReference type="NCBI Taxonomy" id="224308"/>
    <lineage>
        <taxon>Bacteria</taxon>
        <taxon>Bacillati</taxon>
        <taxon>Bacillota</taxon>
        <taxon>Bacilli</taxon>
        <taxon>Bacillales</taxon>
        <taxon>Bacillaceae</taxon>
        <taxon>Bacillus</taxon>
    </lineage>
</organism>
<proteinExistence type="evidence at protein level"/>
<gene>
    <name type="primary">cheR</name>
    <name type="ordered locus">BSU22720</name>
</gene>
<name>CHER_BACSU</name>
<reference key="1">
    <citation type="journal article" date="1993" name="J. Biol. Chem.">
        <title>Chemotactic methyltransferase promotes adaptation to repellents in Bacillus subtilis.</title>
        <authorList>
            <person name="Kirsch M.L."/>
            <person name="Zuberi A.R."/>
            <person name="Henner D.J."/>
            <person name="Peters P.D."/>
            <person name="Yazdi M.A."/>
            <person name="Ordal G.W."/>
        </authorList>
    </citation>
    <scope>NUCLEOTIDE SEQUENCE [GENOMIC DNA]</scope>
    <source>
        <strain>168 / OI1085</strain>
    </source>
</reference>
<reference key="2">
    <citation type="submission" date="1992-01" db="EMBL/GenBank/DDBJ databases">
        <title>Sequence of Bacillus subtilis dbpA, mtr(A,B), gerC(1-3), ndk, cheR, aro(B,E,F,H), trp(A-F), hisH, and tyrA genes.</title>
        <authorList>
            <person name="Henner D.J."/>
        </authorList>
    </citation>
    <scope>NUCLEOTIDE SEQUENCE [GENOMIC DNA]</scope>
</reference>
<reference key="3">
    <citation type="journal article" date="1997" name="Nature">
        <title>The complete genome sequence of the Gram-positive bacterium Bacillus subtilis.</title>
        <authorList>
            <person name="Kunst F."/>
            <person name="Ogasawara N."/>
            <person name="Moszer I."/>
            <person name="Albertini A.M."/>
            <person name="Alloni G."/>
            <person name="Azevedo V."/>
            <person name="Bertero M.G."/>
            <person name="Bessieres P."/>
            <person name="Bolotin A."/>
            <person name="Borchert S."/>
            <person name="Borriss R."/>
            <person name="Boursier L."/>
            <person name="Brans A."/>
            <person name="Braun M."/>
            <person name="Brignell S.C."/>
            <person name="Bron S."/>
            <person name="Brouillet S."/>
            <person name="Bruschi C.V."/>
            <person name="Caldwell B."/>
            <person name="Capuano V."/>
            <person name="Carter N.M."/>
            <person name="Choi S.-K."/>
            <person name="Codani J.-J."/>
            <person name="Connerton I.F."/>
            <person name="Cummings N.J."/>
            <person name="Daniel R.A."/>
            <person name="Denizot F."/>
            <person name="Devine K.M."/>
            <person name="Duesterhoeft A."/>
            <person name="Ehrlich S.D."/>
            <person name="Emmerson P.T."/>
            <person name="Entian K.-D."/>
            <person name="Errington J."/>
            <person name="Fabret C."/>
            <person name="Ferrari E."/>
            <person name="Foulger D."/>
            <person name="Fritz C."/>
            <person name="Fujita M."/>
            <person name="Fujita Y."/>
            <person name="Fuma S."/>
            <person name="Galizzi A."/>
            <person name="Galleron N."/>
            <person name="Ghim S.-Y."/>
            <person name="Glaser P."/>
            <person name="Goffeau A."/>
            <person name="Golightly E.J."/>
            <person name="Grandi G."/>
            <person name="Guiseppi G."/>
            <person name="Guy B.J."/>
            <person name="Haga K."/>
            <person name="Haiech J."/>
            <person name="Harwood C.R."/>
            <person name="Henaut A."/>
            <person name="Hilbert H."/>
            <person name="Holsappel S."/>
            <person name="Hosono S."/>
            <person name="Hullo M.-F."/>
            <person name="Itaya M."/>
            <person name="Jones L.-M."/>
            <person name="Joris B."/>
            <person name="Karamata D."/>
            <person name="Kasahara Y."/>
            <person name="Klaerr-Blanchard M."/>
            <person name="Klein C."/>
            <person name="Kobayashi Y."/>
            <person name="Koetter P."/>
            <person name="Koningstein G."/>
            <person name="Krogh S."/>
            <person name="Kumano M."/>
            <person name="Kurita K."/>
            <person name="Lapidus A."/>
            <person name="Lardinois S."/>
            <person name="Lauber J."/>
            <person name="Lazarevic V."/>
            <person name="Lee S.-M."/>
            <person name="Levine A."/>
            <person name="Liu H."/>
            <person name="Masuda S."/>
            <person name="Mauel C."/>
            <person name="Medigue C."/>
            <person name="Medina N."/>
            <person name="Mellado R.P."/>
            <person name="Mizuno M."/>
            <person name="Moestl D."/>
            <person name="Nakai S."/>
            <person name="Noback M."/>
            <person name="Noone D."/>
            <person name="O'Reilly M."/>
            <person name="Ogawa K."/>
            <person name="Ogiwara A."/>
            <person name="Oudega B."/>
            <person name="Park S.-H."/>
            <person name="Parro V."/>
            <person name="Pohl T.M."/>
            <person name="Portetelle D."/>
            <person name="Porwollik S."/>
            <person name="Prescott A.M."/>
            <person name="Presecan E."/>
            <person name="Pujic P."/>
            <person name="Purnelle B."/>
            <person name="Rapoport G."/>
            <person name="Rey M."/>
            <person name="Reynolds S."/>
            <person name="Rieger M."/>
            <person name="Rivolta C."/>
            <person name="Rocha E."/>
            <person name="Roche B."/>
            <person name="Rose M."/>
            <person name="Sadaie Y."/>
            <person name="Sato T."/>
            <person name="Scanlan E."/>
            <person name="Schleich S."/>
            <person name="Schroeter R."/>
            <person name="Scoffone F."/>
            <person name="Sekiguchi J."/>
            <person name="Sekowska A."/>
            <person name="Seror S.J."/>
            <person name="Serror P."/>
            <person name="Shin B.-S."/>
            <person name="Soldo B."/>
            <person name="Sorokin A."/>
            <person name="Tacconi E."/>
            <person name="Takagi T."/>
            <person name="Takahashi H."/>
            <person name="Takemaru K."/>
            <person name="Takeuchi M."/>
            <person name="Tamakoshi A."/>
            <person name="Tanaka T."/>
            <person name="Terpstra P."/>
            <person name="Tognoni A."/>
            <person name="Tosato V."/>
            <person name="Uchiyama S."/>
            <person name="Vandenbol M."/>
            <person name="Vannier F."/>
            <person name="Vassarotti A."/>
            <person name="Viari A."/>
            <person name="Wambutt R."/>
            <person name="Wedler E."/>
            <person name="Wedler H."/>
            <person name="Weitzenegger T."/>
            <person name="Winters P."/>
            <person name="Wipat A."/>
            <person name="Yamamoto H."/>
            <person name="Yamane K."/>
            <person name="Yasumoto K."/>
            <person name="Yata K."/>
            <person name="Yoshida K."/>
            <person name="Yoshikawa H.-F."/>
            <person name="Zumstein E."/>
            <person name="Yoshikawa H."/>
            <person name="Danchin A."/>
        </authorList>
    </citation>
    <scope>NUCLEOTIDE SEQUENCE [LARGE SCALE GENOMIC DNA]</scope>
    <source>
        <strain>168</strain>
    </source>
</reference>
<reference key="4">
    <citation type="journal article" date="1999" name="Genome Res.">
        <title>Detecting and analyzing DNA sequencing errors: toward a higher quality of the Bacillus subtilis genome sequence.</title>
        <authorList>
            <person name="Medigue C."/>
            <person name="Rose M."/>
            <person name="Viari A."/>
            <person name="Danchin A."/>
        </authorList>
    </citation>
    <scope>SEQUENCE REVISION</scope>
</reference>
<evidence type="ECO:0000250" key="1"/>
<evidence type="ECO:0000255" key="2">
    <source>
        <dbReference type="PROSITE-ProRule" id="PRU00051"/>
    </source>
</evidence>
<evidence type="ECO:0000305" key="3"/>
<evidence type="ECO:0007829" key="4">
    <source>
        <dbReference type="PDB" id="5FTW"/>
    </source>
</evidence>
<comment type="function">
    <text>Methylation of the membrane-bound methyl-accepting chemotaxis proteins (MCP) to form gamma-glutamyl methyl ester residues in MCP. CheR is responsible for the chemotactic adaptation to repellents.</text>
</comment>
<comment type="catalytic activity">
    <reaction>
        <text>L-glutamyl-[protein] + S-adenosyl-L-methionine = [protein]-L-glutamate 5-O-methyl ester + S-adenosyl-L-homocysteine</text>
        <dbReference type="Rhea" id="RHEA:24452"/>
        <dbReference type="Rhea" id="RHEA-COMP:10208"/>
        <dbReference type="Rhea" id="RHEA-COMP:10311"/>
        <dbReference type="ChEBI" id="CHEBI:29973"/>
        <dbReference type="ChEBI" id="CHEBI:57856"/>
        <dbReference type="ChEBI" id="CHEBI:59789"/>
        <dbReference type="ChEBI" id="CHEBI:82795"/>
        <dbReference type="EC" id="2.1.1.80"/>
    </reaction>
</comment>
<comment type="subunit">
    <text>Monomer.</text>
</comment>
<feature type="chain" id="PRO_0000176030" description="Chemotaxis protein methyltransferase">
    <location>
        <begin position="1"/>
        <end position="256"/>
    </location>
</feature>
<feature type="domain" description="CheR-type methyltransferase" evidence="2">
    <location>
        <begin position="1"/>
        <end position="256"/>
    </location>
</feature>
<feature type="binding site" evidence="1">
    <location>
        <position position="67"/>
    </location>
    <ligand>
        <name>S-adenosyl-L-methionine</name>
        <dbReference type="ChEBI" id="CHEBI:59789"/>
    </ligand>
</feature>
<feature type="binding site" evidence="1">
    <location>
        <position position="69"/>
    </location>
    <ligand>
        <name>S-adenosyl-L-methionine</name>
        <dbReference type="ChEBI" id="CHEBI:59789"/>
    </ligand>
</feature>
<feature type="binding site" evidence="1">
    <location>
        <position position="73"/>
    </location>
    <ligand>
        <name>S-adenosyl-L-methionine</name>
        <dbReference type="ChEBI" id="CHEBI:59789"/>
    </ligand>
</feature>
<feature type="binding site" evidence="1">
    <location>
        <position position="107"/>
    </location>
    <ligand>
        <name>S-adenosyl-L-methionine</name>
        <dbReference type="ChEBI" id="CHEBI:59789"/>
    </ligand>
</feature>
<feature type="binding site" evidence="1">
    <location>
        <position position="130"/>
    </location>
    <ligand>
        <name>S-adenosyl-L-methionine</name>
        <dbReference type="ChEBI" id="CHEBI:59789"/>
    </ligand>
</feature>
<feature type="binding site" evidence="1">
    <location>
        <begin position="185"/>
        <end position="186"/>
    </location>
    <ligand>
        <name>S-adenosyl-L-methionine</name>
        <dbReference type="ChEBI" id="CHEBI:59789"/>
    </ligand>
</feature>
<feature type="binding site" evidence="1">
    <location>
        <begin position="201"/>
        <end position="202"/>
    </location>
    <ligand>
        <name>S-adenosyl-L-methionine</name>
        <dbReference type="ChEBI" id="CHEBI:59789"/>
    </ligand>
</feature>
<feature type="sequence conflict" description="In Ref. 1; CAA52033." evidence="3" ref="1">
    <original>LS</original>
    <variation>VC</variation>
    <location>
        <begin position="154"/>
        <end position="155"/>
    </location>
</feature>
<feature type="sequence conflict" description="In Ref. 2; AAA20858." evidence="3" ref="2">
    <original>V</original>
    <variation>M</variation>
    <location>
        <position position="156"/>
    </location>
</feature>
<feature type="sequence conflict" description="In Ref. 2; AAA20858." evidence="3" ref="2">
    <original>R</original>
    <variation>KID</variation>
    <location>
        <position position="256"/>
    </location>
</feature>
<feature type="helix" evidence="4">
    <location>
        <begin position="3"/>
        <end position="15"/>
    </location>
</feature>
<feature type="helix" evidence="4">
    <location>
        <begin position="19"/>
        <end position="21"/>
    </location>
</feature>
<feature type="helix" evidence="4">
    <location>
        <begin position="24"/>
        <end position="37"/>
    </location>
</feature>
<feature type="helix" evidence="4">
    <location>
        <begin position="43"/>
        <end position="52"/>
    </location>
</feature>
<feature type="helix" evidence="4">
    <location>
        <begin position="54"/>
        <end position="62"/>
    </location>
</feature>
<feature type="helix" evidence="4">
    <location>
        <begin position="75"/>
        <end position="84"/>
    </location>
</feature>
<feature type="helix" evidence="4">
    <location>
        <begin position="86"/>
        <end position="89"/>
    </location>
</feature>
<feature type="strand" evidence="4">
    <location>
        <begin position="95"/>
        <end position="101"/>
    </location>
</feature>
<feature type="turn" evidence="4">
    <location>
        <begin position="103"/>
        <end position="105"/>
    </location>
</feature>
<feature type="helix" evidence="4">
    <location>
        <begin position="106"/>
        <end position="116"/>
    </location>
</feature>
<feature type="strand" evidence="4">
    <location>
        <begin position="124"/>
        <end position="131"/>
    </location>
</feature>
<feature type="helix" evidence="4">
    <location>
        <begin position="133"/>
        <end position="141"/>
    </location>
</feature>
<feature type="strand" evidence="4">
    <location>
        <begin position="143"/>
        <end position="145"/>
    </location>
</feature>
<feature type="helix" evidence="4">
    <location>
        <begin position="146"/>
        <end position="148"/>
    </location>
</feature>
<feature type="helix" evidence="4">
    <location>
        <begin position="154"/>
        <end position="160"/>
    </location>
</feature>
<feature type="strand" evidence="4">
    <location>
        <begin position="161"/>
        <end position="165"/>
    </location>
</feature>
<feature type="strand" evidence="4">
    <location>
        <begin position="168"/>
        <end position="171"/>
    </location>
</feature>
<feature type="helix" evidence="4">
    <location>
        <begin position="173"/>
        <end position="176"/>
    </location>
</feature>
<feature type="strand" evidence="4">
    <location>
        <begin position="179"/>
        <end position="183"/>
    </location>
</feature>
<feature type="turn" evidence="4">
    <location>
        <begin position="186"/>
        <end position="188"/>
    </location>
</feature>
<feature type="strand" evidence="4">
    <location>
        <begin position="195"/>
        <end position="200"/>
    </location>
</feature>
<feature type="helix" evidence="4">
    <location>
        <begin position="204"/>
        <end position="206"/>
    </location>
</feature>
<feature type="helix" evidence="4">
    <location>
        <begin position="209"/>
        <end position="222"/>
    </location>
</feature>
<feature type="strand" evidence="4">
    <location>
        <begin position="223"/>
        <end position="231"/>
    </location>
</feature>
<feature type="helix" evidence="4">
    <location>
        <begin position="240"/>
        <end position="243"/>
    </location>
</feature>
<feature type="strand" evidence="4">
    <location>
        <begin position="245"/>
        <end position="249"/>
    </location>
</feature>
<feature type="strand" evidence="4">
    <location>
        <begin position="252"/>
        <end position="255"/>
    </location>
</feature>